<sequence>MAVPKRRTSKTRKNKRRTHFKISVPGMTECPNCGEYKLSHRVCKNCGSYNGEEVAAK</sequence>
<feature type="chain" id="PRO_1000072066" description="Large ribosomal subunit protein bL32">
    <location>
        <begin position="1"/>
        <end position="57"/>
    </location>
</feature>
<proteinExistence type="inferred from homology"/>
<organism>
    <name type="scientific">Staphylococcus aureus (strain Newman)</name>
    <dbReference type="NCBI Taxonomy" id="426430"/>
    <lineage>
        <taxon>Bacteria</taxon>
        <taxon>Bacillati</taxon>
        <taxon>Bacillota</taxon>
        <taxon>Bacilli</taxon>
        <taxon>Bacillales</taxon>
        <taxon>Staphylococcaceae</taxon>
        <taxon>Staphylococcus</taxon>
    </lineage>
</organism>
<comment type="similarity">
    <text evidence="1">Belongs to the bacterial ribosomal protein bL32 family.</text>
</comment>
<accession>A6QFY1</accession>
<keyword id="KW-0687">Ribonucleoprotein</keyword>
<keyword id="KW-0689">Ribosomal protein</keyword>
<dbReference type="EMBL" id="AP009351">
    <property type="protein sequence ID" value="BAF67263.1"/>
    <property type="molecule type" value="Genomic_DNA"/>
</dbReference>
<dbReference type="RefSeq" id="WP_000290472.1">
    <property type="nucleotide sequence ID" value="NZ_JBBIAE010000002.1"/>
</dbReference>
<dbReference type="SMR" id="A6QFY1"/>
<dbReference type="GeneID" id="98345444"/>
<dbReference type="KEGG" id="sae:NWMN_0991"/>
<dbReference type="HOGENOM" id="CLU_129084_1_3_9"/>
<dbReference type="Proteomes" id="UP000006386">
    <property type="component" value="Chromosome"/>
</dbReference>
<dbReference type="GO" id="GO:0015934">
    <property type="term" value="C:large ribosomal subunit"/>
    <property type="evidence" value="ECO:0007669"/>
    <property type="project" value="InterPro"/>
</dbReference>
<dbReference type="GO" id="GO:0003735">
    <property type="term" value="F:structural constituent of ribosome"/>
    <property type="evidence" value="ECO:0007669"/>
    <property type="project" value="InterPro"/>
</dbReference>
<dbReference type="GO" id="GO:0006412">
    <property type="term" value="P:translation"/>
    <property type="evidence" value="ECO:0007669"/>
    <property type="project" value="UniProtKB-UniRule"/>
</dbReference>
<dbReference type="Gene3D" id="1.20.5.640">
    <property type="entry name" value="Single helix bin"/>
    <property type="match status" value="1"/>
</dbReference>
<dbReference type="HAMAP" id="MF_00340">
    <property type="entry name" value="Ribosomal_bL32"/>
    <property type="match status" value="1"/>
</dbReference>
<dbReference type="InterPro" id="IPR002677">
    <property type="entry name" value="Ribosomal_bL32"/>
</dbReference>
<dbReference type="InterPro" id="IPR044957">
    <property type="entry name" value="Ribosomal_bL32_bact"/>
</dbReference>
<dbReference type="InterPro" id="IPR011332">
    <property type="entry name" value="Ribosomal_zn-bd"/>
</dbReference>
<dbReference type="NCBIfam" id="TIGR01031">
    <property type="entry name" value="rpmF_bact"/>
    <property type="match status" value="1"/>
</dbReference>
<dbReference type="PANTHER" id="PTHR35534">
    <property type="entry name" value="50S RIBOSOMAL PROTEIN L32"/>
    <property type="match status" value="1"/>
</dbReference>
<dbReference type="PANTHER" id="PTHR35534:SF2">
    <property type="entry name" value="LARGE RIBOSOMAL SUBUNIT PROTEIN BL32"/>
    <property type="match status" value="1"/>
</dbReference>
<dbReference type="Pfam" id="PF01783">
    <property type="entry name" value="Ribosomal_L32p"/>
    <property type="match status" value="1"/>
</dbReference>
<dbReference type="SUPFAM" id="SSF57829">
    <property type="entry name" value="Zn-binding ribosomal proteins"/>
    <property type="match status" value="1"/>
</dbReference>
<gene>
    <name evidence="1" type="primary">rpmF</name>
    <name type="ordered locus">NWMN_0991</name>
</gene>
<reference key="1">
    <citation type="journal article" date="2008" name="J. Bacteriol.">
        <title>Genome sequence of Staphylococcus aureus strain Newman and comparative analysis of staphylococcal genomes: polymorphism and evolution of two major pathogenicity islands.</title>
        <authorList>
            <person name="Baba T."/>
            <person name="Bae T."/>
            <person name="Schneewind O."/>
            <person name="Takeuchi F."/>
            <person name="Hiramatsu K."/>
        </authorList>
    </citation>
    <scope>NUCLEOTIDE SEQUENCE [LARGE SCALE GENOMIC DNA]</scope>
    <source>
        <strain>Newman</strain>
    </source>
</reference>
<evidence type="ECO:0000255" key="1">
    <source>
        <dbReference type="HAMAP-Rule" id="MF_00340"/>
    </source>
</evidence>
<evidence type="ECO:0000305" key="2"/>
<protein>
    <recommendedName>
        <fullName evidence="1">Large ribosomal subunit protein bL32</fullName>
    </recommendedName>
    <alternativeName>
        <fullName evidence="2">50S ribosomal protein L32</fullName>
    </alternativeName>
</protein>
<name>RL32_STAAE</name>